<evidence type="ECO:0000255" key="1">
    <source>
        <dbReference type="HAMAP-Rule" id="MF_00144"/>
    </source>
</evidence>
<feature type="chain" id="PRO_0000121647" description="tRNA-specific 2-thiouridylase MnmA">
    <location>
        <begin position="1"/>
        <end position="371"/>
    </location>
</feature>
<feature type="region of interest" description="Interaction with target base in tRNA" evidence="1">
    <location>
        <begin position="99"/>
        <end position="101"/>
    </location>
</feature>
<feature type="region of interest" description="Interaction with tRNA" evidence="1">
    <location>
        <begin position="150"/>
        <end position="152"/>
    </location>
</feature>
<feature type="region of interest" description="Interaction with tRNA" evidence="1">
    <location>
        <begin position="308"/>
        <end position="309"/>
    </location>
</feature>
<feature type="active site" description="Nucleophile" evidence="1">
    <location>
        <position position="104"/>
    </location>
</feature>
<feature type="active site" description="Cysteine persulfide intermediate" evidence="1">
    <location>
        <position position="200"/>
    </location>
</feature>
<feature type="binding site" evidence="1">
    <location>
        <begin position="13"/>
        <end position="20"/>
    </location>
    <ligand>
        <name>ATP</name>
        <dbReference type="ChEBI" id="CHEBI:30616"/>
    </ligand>
</feature>
<feature type="binding site" evidence="1">
    <location>
        <position position="39"/>
    </location>
    <ligand>
        <name>ATP</name>
        <dbReference type="ChEBI" id="CHEBI:30616"/>
    </ligand>
</feature>
<feature type="binding site" evidence="1">
    <location>
        <position position="128"/>
    </location>
    <ligand>
        <name>ATP</name>
        <dbReference type="ChEBI" id="CHEBI:30616"/>
    </ligand>
</feature>
<feature type="site" description="Interaction with tRNA" evidence="1">
    <location>
        <position position="129"/>
    </location>
</feature>
<feature type="site" description="Interaction with tRNA" evidence="1">
    <location>
        <position position="341"/>
    </location>
</feature>
<feature type="disulfide bond" description="Alternate" evidence="1">
    <location>
        <begin position="104"/>
        <end position="200"/>
    </location>
</feature>
<organism>
    <name type="scientific">Listeria innocua serovar 6a (strain ATCC BAA-680 / CLIP 11262)</name>
    <dbReference type="NCBI Taxonomy" id="272626"/>
    <lineage>
        <taxon>Bacteria</taxon>
        <taxon>Bacillati</taxon>
        <taxon>Bacillota</taxon>
        <taxon>Bacilli</taxon>
        <taxon>Bacillales</taxon>
        <taxon>Listeriaceae</taxon>
        <taxon>Listeria</taxon>
    </lineage>
</organism>
<sequence>MSTNNSDIRVVVGMSGGVDSSVTAHILKEQGYDVIGIFMKNWDDTDEFGVCTATEDYDDVIRVANQIGIPYYAVNFEKEYWDKVFTYFLDEYKLGRTPNPDVMCNKEIKFKAFLEHAESLGADYVATGHYAQVKKVGDEIELLRGVDNNKDQTYFLNQLSQDQLKKVMFPLGGMEKTEVREIATKAGLATANKKDSTGICFIGERNFKQFLSEYLPAQPGDMRTLNGEVLGKHDGLMYYTIGQRHGLGIGGDGEPWFVVGKDLKNNVLFVEQGFHHDSLYSDSLIATDISFTTNSEKPKTFVCTAKFRYRQTDTKVTVNMREDGTAEVVFADPVRAITPGQAVVFYDGDICLGGGTIDTVWKKGAKLNYVG</sequence>
<name>MNMA_LISIN</name>
<gene>
    <name evidence="1" type="primary">mnmA</name>
    <name type="synonym">trmU</name>
    <name type="ordered locus">lin1547</name>
</gene>
<protein>
    <recommendedName>
        <fullName evidence="1">tRNA-specific 2-thiouridylase MnmA</fullName>
        <ecNumber evidence="1">2.8.1.13</ecNumber>
    </recommendedName>
</protein>
<keyword id="KW-0067">ATP-binding</keyword>
<keyword id="KW-0963">Cytoplasm</keyword>
<keyword id="KW-1015">Disulfide bond</keyword>
<keyword id="KW-0547">Nucleotide-binding</keyword>
<keyword id="KW-0694">RNA-binding</keyword>
<keyword id="KW-0808">Transferase</keyword>
<keyword id="KW-0819">tRNA processing</keyword>
<keyword id="KW-0820">tRNA-binding</keyword>
<reference key="1">
    <citation type="journal article" date="2001" name="Science">
        <title>Comparative genomics of Listeria species.</title>
        <authorList>
            <person name="Glaser P."/>
            <person name="Frangeul L."/>
            <person name="Buchrieser C."/>
            <person name="Rusniok C."/>
            <person name="Amend A."/>
            <person name="Baquero F."/>
            <person name="Berche P."/>
            <person name="Bloecker H."/>
            <person name="Brandt P."/>
            <person name="Chakraborty T."/>
            <person name="Charbit A."/>
            <person name="Chetouani F."/>
            <person name="Couve E."/>
            <person name="de Daruvar A."/>
            <person name="Dehoux P."/>
            <person name="Domann E."/>
            <person name="Dominguez-Bernal G."/>
            <person name="Duchaud E."/>
            <person name="Durant L."/>
            <person name="Dussurget O."/>
            <person name="Entian K.-D."/>
            <person name="Fsihi H."/>
            <person name="Garcia-del Portillo F."/>
            <person name="Garrido P."/>
            <person name="Gautier L."/>
            <person name="Goebel W."/>
            <person name="Gomez-Lopez N."/>
            <person name="Hain T."/>
            <person name="Hauf J."/>
            <person name="Jackson D."/>
            <person name="Jones L.-M."/>
            <person name="Kaerst U."/>
            <person name="Kreft J."/>
            <person name="Kuhn M."/>
            <person name="Kunst F."/>
            <person name="Kurapkat G."/>
            <person name="Madueno E."/>
            <person name="Maitournam A."/>
            <person name="Mata Vicente J."/>
            <person name="Ng E."/>
            <person name="Nedjari H."/>
            <person name="Nordsiek G."/>
            <person name="Novella S."/>
            <person name="de Pablos B."/>
            <person name="Perez-Diaz J.-C."/>
            <person name="Purcell R."/>
            <person name="Remmel B."/>
            <person name="Rose M."/>
            <person name="Schlueter T."/>
            <person name="Simoes N."/>
            <person name="Tierrez A."/>
            <person name="Vazquez-Boland J.-A."/>
            <person name="Voss H."/>
            <person name="Wehland J."/>
            <person name="Cossart P."/>
        </authorList>
    </citation>
    <scope>NUCLEOTIDE SEQUENCE [LARGE SCALE GENOMIC DNA]</scope>
    <source>
        <strain>ATCC BAA-680 / CLIP 11262</strain>
    </source>
</reference>
<accession>Q92BK1</accession>
<proteinExistence type="inferred from homology"/>
<comment type="function">
    <text evidence="1">Catalyzes the 2-thiolation of uridine at the wobble position (U34) of tRNA, leading to the formation of s(2)U34.</text>
</comment>
<comment type="catalytic activity">
    <reaction evidence="1">
        <text>S-sulfanyl-L-cysteinyl-[protein] + uridine(34) in tRNA + AH2 + ATP = 2-thiouridine(34) in tRNA + L-cysteinyl-[protein] + A + AMP + diphosphate + H(+)</text>
        <dbReference type="Rhea" id="RHEA:47032"/>
        <dbReference type="Rhea" id="RHEA-COMP:10131"/>
        <dbReference type="Rhea" id="RHEA-COMP:11726"/>
        <dbReference type="Rhea" id="RHEA-COMP:11727"/>
        <dbReference type="Rhea" id="RHEA-COMP:11728"/>
        <dbReference type="ChEBI" id="CHEBI:13193"/>
        <dbReference type="ChEBI" id="CHEBI:15378"/>
        <dbReference type="ChEBI" id="CHEBI:17499"/>
        <dbReference type="ChEBI" id="CHEBI:29950"/>
        <dbReference type="ChEBI" id="CHEBI:30616"/>
        <dbReference type="ChEBI" id="CHEBI:33019"/>
        <dbReference type="ChEBI" id="CHEBI:61963"/>
        <dbReference type="ChEBI" id="CHEBI:65315"/>
        <dbReference type="ChEBI" id="CHEBI:87170"/>
        <dbReference type="ChEBI" id="CHEBI:456215"/>
        <dbReference type="EC" id="2.8.1.13"/>
    </reaction>
</comment>
<comment type="subcellular location">
    <subcellularLocation>
        <location evidence="1">Cytoplasm</location>
    </subcellularLocation>
</comment>
<comment type="similarity">
    <text evidence="1">Belongs to the MnmA/TRMU family.</text>
</comment>
<dbReference type="EC" id="2.8.1.13" evidence="1"/>
<dbReference type="EMBL" id="AL596168">
    <property type="protein sequence ID" value="CAC96778.1"/>
    <property type="molecule type" value="Genomic_DNA"/>
</dbReference>
<dbReference type="PIR" id="AB1626">
    <property type="entry name" value="AB1626"/>
</dbReference>
<dbReference type="RefSeq" id="WP_010991588.1">
    <property type="nucleotide sequence ID" value="NC_003212.1"/>
</dbReference>
<dbReference type="SMR" id="Q92BK1"/>
<dbReference type="STRING" id="272626.gene:17565878"/>
<dbReference type="GeneID" id="93234928"/>
<dbReference type="KEGG" id="lin:lin1547"/>
<dbReference type="eggNOG" id="COG0482">
    <property type="taxonomic scope" value="Bacteria"/>
</dbReference>
<dbReference type="HOGENOM" id="CLU_035188_1_0_9"/>
<dbReference type="OrthoDB" id="9800696at2"/>
<dbReference type="Proteomes" id="UP000002513">
    <property type="component" value="Chromosome"/>
</dbReference>
<dbReference type="GO" id="GO:0005737">
    <property type="term" value="C:cytoplasm"/>
    <property type="evidence" value="ECO:0007669"/>
    <property type="project" value="UniProtKB-SubCell"/>
</dbReference>
<dbReference type="GO" id="GO:0005524">
    <property type="term" value="F:ATP binding"/>
    <property type="evidence" value="ECO:0007669"/>
    <property type="project" value="UniProtKB-KW"/>
</dbReference>
<dbReference type="GO" id="GO:0000049">
    <property type="term" value="F:tRNA binding"/>
    <property type="evidence" value="ECO:0007669"/>
    <property type="project" value="UniProtKB-KW"/>
</dbReference>
<dbReference type="GO" id="GO:0103016">
    <property type="term" value="F:tRNA-uridine 2-sulfurtransferase activity"/>
    <property type="evidence" value="ECO:0007669"/>
    <property type="project" value="UniProtKB-EC"/>
</dbReference>
<dbReference type="GO" id="GO:0002143">
    <property type="term" value="P:tRNA wobble position uridine thiolation"/>
    <property type="evidence" value="ECO:0007669"/>
    <property type="project" value="TreeGrafter"/>
</dbReference>
<dbReference type="CDD" id="cd01998">
    <property type="entry name" value="MnmA_TRMU-like"/>
    <property type="match status" value="1"/>
</dbReference>
<dbReference type="FunFam" id="2.30.30.280:FF:000001">
    <property type="entry name" value="tRNA-specific 2-thiouridylase MnmA"/>
    <property type="match status" value="1"/>
</dbReference>
<dbReference type="FunFam" id="2.40.30.10:FF:000023">
    <property type="entry name" value="tRNA-specific 2-thiouridylase MnmA"/>
    <property type="match status" value="1"/>
</dbReference>
<dbReference type="FunFam" id="3.40.50.620:FF:000004">
    <property type="entry name" value="tRNA-specific 2-thiouridylase MnmA"/>
    <property type="match status" value="1"/>
</dbReference>
<dbReference type="Gene3D" id="2.30.30.280">
    <property type="entry name" value="Adenine nucleotide alpha hydrolases-like domains"/>
    <property type="match status" value="1"/>
</dbReference>
<dbReference type="Gene3D" id="3.40.50.620">
    <property type="entry name" value="HUPs"/>
    <property type="match status" value="1"/>
</dbReference>
<dbReference type="Gene3D" id="2.40.30.10">
    <property type="entry name" value="Translation factors"/>
    <property type="match status" value="1"/>
</dbReference>
<dbReference type="HAMAP" id="MF_00144">
    <property type="entry name" value="tRNA_thiouridyl_MnmA"/>
    <property type="match status" value="1"/>
</dbReference>
<dbReference type="InterPro" id="IPR004506">
    <property type="entry name" value="MnmA-like"/>
</dbReference>
<dbReference type="InterPro" id="IPR046885">
    <property type="entry name" value="MnmA-like_C"/>
</dbReference>
<dbReference type="InterPro" id="IPR046884">
    <property type="entry name" value="MnmA-like_central"/>
</dbReference>
<dbReference type="InterPro" id="IPR023382">
    <property type="entry name" value="MnmA-like_central_sf"/>
</dbReference>
<dbReference type="InterPro" id="IPR014729">
    <property type="entry name" value="Rossmann-like_a/b/a_fold"/>
</dbReference>
<dbReference type="NCBIfam" id="NF001138">
    <property type="entry name" value="PRK00143.1"/>
    <property type="match status" value="1"/>
</dbReference>
<dbReference type="NCBIfam" id="TIGR00420">
    <property type="entry name" value="trmU"/>
    <property type="match status" value="1"/>
</dbReference>
<dbReference type="PANTHER" id="PTHR11933:SF5">
    <property type="entry name" value="MITOCHONDRIAL TRNA-SPECIFIC 2-THIOURIDYLASE 1"/>
    <property type="match status" value="1"/>
</dbReference>
<dbReference type="PANTHER" id="PTHR11933">
    <property type="entry name" value="TRNA 5-METHYLAMINOMETHYL-2-THIOURIDYLATE -METHYLTRANSFERASE"/>
    <property type="match status" value="1"/>
</dbReference>
<dbReference type="Pfam" id="PF03054">
    <property type="entry name" value="tRNA_Me_trans"/>
    <property type="match status" value="1"/>
</dbReference>
<dbReference type="Pfam" id="PF20258">
    <property type="entry name" value="tRNA_Me_trans_C"/>
    <property type="match status" value="1"/>
</dbReference>
<dbReference type="Pfam" id="PF20259">
    <property type="entry name" value="tRNA_Me_trans_M"/>
    <property type="match status" value="1"/>
</dbReference>
<dbReference type="SUPFAM" id="SSF52402">
    <property type="entry name" value="Adenine nucleotide alpha hydrolases-like"/>
    <property type="match status" value="1"/>
</dbReference>